<protein>
    <recommendedName>
        <fullName evidence="1">Glutamyl-tRNA(Gln) amidotransferase subunit A</fullName>
        <shortName evidence="1">Glu-ADT subunit A</shortName>
        <ecNumber evidence="1">6.3.5.7</ecNumber>
    </recommendedName>
</protein>
<organism>
    <name type="scientific">Staphylococcus aureus</name>
    <dbReference type="NCBI Taxonomy" id="1280"/>
    <lineage>
        <taxon>Bacteria</taxon>
        <taxon>Bacillati</taxon>
        <taxon>Bacillota</taxon>
        <taxon>Bacilli</taxon>
        <taxon>Bacillales</taxon>
        <taxon>Staphylococcaceae</taxon>
        <taxon>Staphylococcus</taxon>
    </lineage>
</organism>
<comment type="function">
    <text evidence="1">Allows the formation of correctly charged Gln-tRNA(Gln) through the transamidation of misacylated Glu-tRNA(Gln) in organisms which lack glutaminyl-tRNA synthetase. The reaction takes place in the presence of glutamine and ATP through an activated gamma-phospho-Glu-tRNA(Gln).</text>
</comment>
<comment type="catalytic activity">
    <reaction evidence="1">
        <text>L-glutamyl-tRNA(Gln) + L-glutamine + ATP + H2O = L-glutaminyl-tRNA(Gln) + L-glutamate + ADP + phosphate + H(+)</text>
        <dbReference type="Rhea" id="RHEA:17521"/>
        <dbReference type="Rhea" id="RHEA-COMP:9681"/>
        <dbReference type="Rhea" id="RHEA-COMP:9684"/>
        <dbReference type="ChEBI" id="CHEBI:15377"/>
        <dbReference type="ChEBI" id="CHEBI:15378"/>
        <dbReference type="ChEBI" id="CHEBI:29985"/>
        <dbReference type="ChEBI" id="CHEBI:30616"/>
        <dbReference type="ChEBI" id="CHEBI:43474"/>
        <dbReference type="ChEBI" id="CHEBI:58359"/>
        <dbReference type="ChEBI" id="CHEBI:78520"/>
        <dbReference type="ChEBI" id="CHEBI:78521"/>
        <dbReference type="ChEBI" id="CHEBI:456216"/>
        <dbReference type="EC" id="6.3.5.7"/>
    </reaction>
</comment>
<comment type="subunit">
    <text evidence="1">Heterotrimer of A, B and C subunits.</text>
</comment>
<comment type="similarity">
    <text evidence="1">Belongs to the amidase family. GatA subfamily.</text>
</comment>
<reference key="1">
    <citation type="submission" date="1999-11" db="EMBL/GenBank/DDBJ databases">
        <title>Glu-tRNAGln amidotransferase of Staphylococcus aureus.</title>
        <authorList>
            <person name="Namgoong S."/>
            <person name="Hong K.-W."/>
            <person name="Lee S.Y."/>
        </authorList>
    </citation>
    <scope>NUCLEOTIDE SEQUENCE [GENOMIC DNA]</scope>
    <source>
        <strain>ATCC 25923 / DSM 1104 / JCM 2413 / NBRC 14462 / NCIMB 12702 / NCTC 12981 / Seattle 1945</strain>
    </source>
</reference>
<sequence>MSIRYESVENLLTLIKDKKIKPSDVVKDIYDAIEETDPTIKSFLALDKENAIKKAQELDELQAKDQMDGKLFGIPMGIKDNIITNGLETTCASKMLEGFVPIYESTVMEKLHNENAVLIGKLNMDEFAMGGSTETSISKKTVNPFDHKAVPGGSSGGSAAAVAAGLVPFSLGSDTGGSIRQPAAYCGVVGMKPTYGRVSRFGLVAFASSLDQIGPLTRNVKDNAIVLEAISGADANDSTSAPVDDVDFTSEIGKDIKGLKVALPKEYLGEGVADDVKEAVQNAVETLKSLGAVVEEVSLPNTKFGIPSYYVIASSEASSNLSRFDGIRYGYHSKEAHSLEELYKMSRSEGFGKEVKRRIFLGTFALSSGYYDAYYKKSQKVRTLIKNDFDKVFENYDVVVGPTAPTTAFNLGEEIDDPLTMYANDLLTTPVNLAGLPGISVPCGQSNGRPIGLQFIGKPFDEKTLYRVAYQYETQYNLHDVYEKL</sequence>
<evidence type="ECO:0000255" key="1">
    <source>
        <dbReference type="HAMAP-Rule" id="MF_00120"/>
    </source>
</evidence>
<feature type="chain" id="PRO_0000105203" description="Glutamyl-tRNA(Gln) amidotransferase subunit A">
    <location>
        <begin position="1"/>
        <end position="485"/>
    </location>
</feature>
<feature type="active site" description="Charge relay system" evidence="1">
    <location>
        <position position="79"/>
    </location>
</feature>
<feature type="active site" description="Charge relay system" evidence="1">
    <location>
        <position position="154"/>
    </location>
</feature>
<feature type="active site" description="Acyl-ester intermediate" evidence="1">
    <location>
        <position position="178"/>
    </location>
</feature>
<accession>Q9RF07</accession>
<name>GATA_STAAU</name>
<proteinExistence type="inferred from homology"/>
<keyword id="KW-0067">ATP-binding</keyword>
<keyword id="KW-0436">Ligase</keyword>
<keyword id="KW-0547">Nucleotide-binding</keyword>
<keyword id="KW-0648">Protein biosynthesis</keyword>
<gene>
    <name evidence="1" type="primary">gatA</name>
</gene>
<dbReference type="EC" id="6.3.5.7" evidence="1"/>
<dbReference type="EMBL" id="AF205033">
    <property type="protein sequence ID" value="AAF18136.1"/>
    <property type="molecule type" value="Genomic_DNA"/>
</dbReference>
<dbReference type="SMR" id="Q9RF07"/>
<dbReference type="GO" id="GO:0030956">
    <property type="term" value="C:glutamyl-tRNA(Gln) amidotransferase complex"/>
    <property type="evidence" value="ECO:0007669"/>
    <property type="project" value="InterPro"/>
</dbReference>
<dbReference type="GO" id="GO:0005524">
    <property type="term" value="F:ATP binding"/>
    <property type="evidence" value="ECO:0007669"/>
    <property type="project" value="UniProtKB-KW"/>
</dbReference>
<dbReference type="GO" id="GO:0050567">
    <property type="term" value="F:glutaminyl-tRNA synthase (glutamine-hydrolyzing) activity"/>
    <property type="evidence" value="ECO:0007669"/>
    <property type="project" value="UniProtKB-UniRule"/>
</dbReference>
<dbReference type="GO" id="GO:0006412">
    <property type="term" value="P:translation"/>
    <property type="evidence" value="ECO:0007669"/>
    <property type="project" value="UniProtKB-UniRule"/>
</dbReference>
<dbReference type="Gene3D" id="3.90.1300.10">
    <property type="entry name" value="Amidase signature (AS) domain"/>
    <property type="match status" value="1"/>
</dbReference>
<dbReference type="HAMAP" id="MF_00120">
    <property type="entry name" value="GatA"/>
    <property type="match status" value="1"/>
</dbReference>
<dbReference type="InterPro" id="IPR000120">
    <property type="entry name" value="Amidase"/>
</dbReference>
<dbReference type="InterPro" id="IPR020556">
    <property type="entry name" value="Amidase_CS"/>
</dbReference>
<dbReference type="InterPro" id="IPR023631">
    <property type="entry name" value="Amidase_dom"/>
</dbReference>
<dbReference type="InterPro" id="IPR036928">
    <property type="entry name" value="AS_sf"/>
</dbReference>
<dbReference type="InterPro" id="IPR004412">
    <property type="entry name" value="GatA"/>
</dbReference>
<dbReference type="NCBIfam" id="TIGR00132">
    <property type="entry name" value="gatA"/>
    <property type="match status" value="1"/>
</dbReference>
<dbReference type="PANTHER" id="PTHR11895:SF151">
    <property type="entry name" value="GLUTAMYL-TRNA(GLN) AMIDOTRANSFERASE SUBUNIT A"/>
    <property type="match status" value="1"/>
</dbReference>
<dbReference type="PANTHER" id="PTHR11895">
    <property type="entry name" value="TRANSAMIDASE"/>
    <property type="match status" value="1"/>
</dbReference>
<dbReference type="Pfam" id="PF01425">
    <property type="entry name" value="Amidase"/>
    <property type="match status" value="1"/>
</dbReference>
<dbReference type="SUPFAM" id="SSF75304">
    <property type="entry name" value="Amidase signature (AS) enzymes"/>
    <property type="match status" value="1"/>
</dbReference>
<dbReference type="PROSITE" id="PS00571">
    <property type="entry name" value="AMIDASES"/>
    <property type="match status" value="1"/>
</dbReference>